<proteinExistence type="inferred from homology"/>
<sequence>MGVHILSTGSSVPNFSVENQQFEDIIETSDHWISTRTGIKKRHLAPSSTSLTKLAAEAANDALSKASINAEDIDLIILATSTPDDLFGSASQLQAEIGATSSTAFDITAACSGFIIALVTASQFIQAGSYNKVLVVGADTMSRWIDWSDRSSCILFGDGAGAVLIGESSINSILGFKLCTDGRLNSHLQLMNSPSDSQQFGLTTVPKGRYDSIRMNGKEVYKFAVFQVPIVIKNCLNDVNISIDEVDWFILHQANIRILEAIATRLSIPLSKMITNLENYGNTSAASIPLALDEAIKEKKIQPGQVVVLAGFGAGLTWGAIVLKWQ</sequence>
<evidence type="ECO:0000255" key="1">
    <source>
        <dbReference type="HAMAP-Rule" id="MF_01815"/>
    </source>
</evidence>
<accession>P51196</accession>
<organism>
    <name type="scientific">Porphyra purpurea</name>
    <name type="common">Red seaweed</name>
    <name type="synonym">Ulva purpurea</name>
    <dbReference type="NCBI Taxonomy" id="2787"/>
    <lineage>
        <taxon>Eukaryota</taxon>
        <taxon>Rhodophyta</taxon>
        <taxon>Bangiophyceae</taxon>
        <taxon>Bangiales</taxon>
        <taxon>Bangiaceae</taxon>
        <taxon>Porphyra</taxon>
    </lineage>
</organism>
<reference key="1">
    <citation type="journal article" date="1995" name="Plant Mol. Biol. Rep.">
        <title>Complete nucleotide sequence of the Porphyra purpurea chloroplast genome.</title>
        <authorList>
            <person name="Reith M.E."/>
            <person name="Munholland J."/>
        </authorList>
    </citation>
    <scope>NUCLEOTIDE SEQUENCE [LARGE SCALE GENOMIC DNA]</scope>
    <source>
        <strain>Avonport</strain>
    </source>
</reference>
<keyword id="KW-0012">Acyltransferase</keyword>
<keyword id="KW-0150">Chloroplast</keyword>
<keyword id="KW-0275">Fatty acid biosynthesis</keyword>
<keyword id="KW-0276">Fatty acid metabolism</keyword>
<keyword id="KW-0444">Lipid biosynthesis</keyword>
<keyword id="KW-0443">Lipid metabolism</keyword>
<keyword id="KW-0511">Multifunctional enzyme</keyword>
<keyword id="KW-0934">Plastid</keyword>
<keyword id="KW-0808">Transferase</keyword>
<name>FABH_PORPU</name>
<feature type="chain" id="PRO_0000110517" description="Beta-ketoacyl-[acyl-carrier-protein] synthase III">
    <location>
        <begin position="1"/>
        <end position="326"/>
    </location>
</feature>
<feature type="region of interest" description="ACP-binding" evidence="1">
    <location>
        <begin position="253"/>
        <end position="257"/>
    </location>
</feature>
<feature type="active site" evidence="1">
    <location>
        <position position="111"/>
    </location>
</feature>
<feature type="active site" evidence="1">
    <location>
        <position position="252"/>
    </location>
</feature>
<feature type="active site" evidence="1">
    <location>
        <position position="282"/>
    </location>
</feature>
<comment type="function">
    <text evidence="1">Catalyzes the condensation reaction of fatty acid synthesis by the addition to an acyl acceptor of two carbons from malonyl-ACP. Catalyzes the first condensation reaction which initiates fatty acid synthesis and may therefore play a role in governing the total rate of fatty acid production. Possesses both acetoacetyl-ACP synthase and acetyl transacylase activities. Its substrate specificity determines the biosynthesis of branched-chain and/or straight-chain of fatty acids.</text>
</comment>
<comment type="catalytic activity">
    <reaction evidence="1">
        <text>malonyl-[ACP] + acetyl-CoA + H(+) = 3-oxobutanoyl-[ACP] + CO2 + CoA</text>
        <dbReference type="Rhea" id="RHEA:12080"/>
        <dbReference type="Rhea" id="RHEA-COMP:9623"/>
        <dbReference type="Rhea" id="RHEA-COMP:9625"/>
        <dbReference type="ChEBI" id="CHEBI:15378"/>
        <dbReference type="ChEBI" id="CHEBI:16526"/>
        <dbReference type="ChEBI" id="CHEBI:57287"/>
        <dbReference type="ChEBI" id="CHEBI:57288"/>
        <dbReference type="ChEBI" id="CHEBI:78449"/>
        <dbReference type="ChEBI" id="CHEBI:78450"/>
        <dbReference type="EC" id="2.3.1.180"/>
    </reaction>
</comment>
<comment type="pathway">
    <text evidence="1">Lipid metabolism; fatty acid biosynthesis.</text>
</comment>
<comment type="subunit">
    <text evidence="1">Homodimer.</text>
</comment>
<comment type="subcellular location">
    <subcellularLocation>
        <location evidence="1">Plastid</location>
        <location evidence="1">Chloroplast</location>
    </subcellularLocation>
</comment>
<comment type="domain">
    <text evidence="1">The last Arg residue of the ACP-binding site is essential for the weak association between ACP/AcpP and FabH.</text>
</comment>
<comment type="similarity">
    <text evidence="1">Belongs to the thiolase-like superfamily. FabH family.</text>
</comment>
<gene>
    <name evidence="1" type="primary">fabH</name>
</gene>
<protein>
    <recommendedName>
        <fullName evidence="1">Beta-ketoacyl-[acyl-carrier-protein] synthase III</fullName>
        <shortName evidence="1">Beta-ketoacyl-ACP synthase III</shortName>
        <shortName evidence="1">KAS III</shortName>
        <ecNumber evidence="1">2.3.1.180</ecNumber>
    </recommendedName>
    <alternativeName>
        <fullName evidence="1">3-oxoacyl-[acyl-carrier-protein] synthase 3</fullName>
    </alternativeName>
    <alternativeName>
        <fullName evidence="1">3-oxoacyl-[acyl-carrier-protein] synthase III</fullName>
    </alternativeName>
</protein>
<dbReference type="EC" id="2.3.1.180" evidence="1"/>
<dbReference type="EMBL" id="U38804">
    <property type="protein sequence ID" value="AAC08082.1"/>
    <property type="molecule type" value="Genomic_DNA"/>
</dbReference>
<dbReference type="PIR" id="S73117">
    <property type="entry name" value="S73117"/>
</dbReference>
<dbReference type="RefSeq" id="NP_053806.1">
    <property type="nucleotide sequence ID" value="NC_000925.1"/>
</dbReference>
<dbReference type="SMR" id="P51196"/>
<dbReference type="GeneID" id="809820"/>
<dbReference type="UniPathway" id="UPA00094"/>
<dbReference type="GO" id="GO:0009507">
    <property type="term" value="C:chloroplast"/>
    <property type="evidence" value="ECO:0007669"/>
    <property type="project" value="UniProtKB-SubCell"/>
</dbReference>
<dbReference type="GO" id="GO:0004315">
    <property type="term" value="F:3-oxoacyl-[acyl-carrier-protein] synthase activity"/>
    <property type="evidence" value="ECO:0007669"/>
    <property type="project" value="InterPro"/>
</dbReference>
<dbReference type="GO" id="GO:0033818">
    <property type="term" value="F:beta-ketoacyl-acyl-carrier-protein synthase III activity"/>
    <property type="evidence" value="ECO:0007669"/>
    <property type="project" value="UniProtKB-UniRule"/>
</dbReference>
<dbReference type="GO" id="GO:0006633">
    <property type="term" value="P:fatty acid biosynthetic process"/>
    <property type="evidence" value="ECO:0007669"/>
    <property type="project" value="UniProtKB-UniRule"/>
</dbReference>
<dbReference type="CDD" id="cd00830">
    <property type="entry name" value="KAS_III"/>
    <property type="match status" value="1"/>
</dbReference>
<dbReference type="FunFam" id="3.40.47.10:FF:000004">
    <property type="entry name" value="3-oxoacyl-[acyl-carrier-protein] synthase 3"/>
    <property type="match status" value="1"/>
</dbReference>
<dbReference type="Gene3D" id="3.40.47.10">
    <property type="match status" value="1"/>
</dbReference>
<dbReference type="HAMAP" id="MF_01815">
    <property type="entry name" value="FabH"/>
    <property type="match status" value="1"/>
</dbReference>
<dbReference type="InterPro" id="IPR013747">
    <property type="entry name" value="ACP_syn_III_C"/>
</dbReference>
<dbReference type="InterPro" id="IPR013751">
    <property type="entry name" value="ACP_syn_III_N"/>
</dbReference>
<dbReference type="InterPro" id="IPR004655">
    <property type="entry name" value="FabH"/>
</dbReference>
<dbReference type="InterPro" id="IPR016039">
    <property type="entry name" value="Thiolase-like"/>
</dbReference>
<dbReference type="NCBIfam" id="TIGR00747">
    <property type="entry name" value="fabH"/>
    <property type="match status" value="1"/>
</dbReference>
<dbReference type="NCBIfam" id="NF006829">
    <property type="entry name" value="PRK09352.1"/>
    <property type="match status" value="1"/>
</dbReference>
<dbReference type="PANTHER" id="PTHR43091">
    <property type="entry name" value="3-OXOACYL-[ACYL-CARRIER-PROTEIN] SYNTHASE"/>
    <property type="match status" value="1"/>
</dbReference>
<dbReference type="PANTHER" id="PTHR43091:SF1">
    <property type="entry name" value="BETA-KETOACYL-[ACYL-CARRIER-PROTEIN] SYNTHASE III, CHLOROPLASTIC"/>
    <property type="match status" value="1"/>
</dbReference>
<dbReference type="Pfam" id="PF08545">
    <property type="entry name" value="ACP_syn_III"/>
    <property type="match status" value="1"/>
</dbReference>
<dbReference type="Pfam" id="PF08541">
    <property type="entry name" value="ACP_syn_III_C"/>
    <property type="match status" value="1"/>
</dbReference>
<dbReference type="SUPFAM" id="SSF53901">
    <property type="entry name" value="Thiolase-like"/>
    <property type="match status" value="1"/>
</dbReference>
<geneLocation type="chloroplast"/>